<name>RS14_BRADU</name>
<proteinExistence type="inferred from homology"/>
<accession>Q89J97</accession>
<evidence type="ECO:0000255" key="1">
    <source>
        <dbReference type="HAMAP-Rule" id="MF_00537"/>
    </source>
</evidence>
<evidence type="ECO:0000256" key="2">
    <source>
        <dbReference type="SAM" id="MobiDB-lite"/>
    </source>
</evidence>
<evidence type="ECO:0000305" key="3"/>
<gene>
    <name evidence="1" type="primary">rpsN</name>
    <name type="ordered locus">bll5387</name>
</gene>
<dbReference type="EMBL" id="BA000040">
    <property type="protein sequence ID" value="BAC50652.1"/>
    <property type="molecule type" value="Genomic_DNA"/>
</dbReference>
<dbReference type="RefSeq" id="NP_772027.1">
    <property type="nucleotide sequence ID" value="NC_004463.1"/>
</dbReference>
<dbReference type="RefSeq" id="WP_011088140.1">
    <property type="nucleotide sequence ID" value="NZ_CP011360.1"/>
</dbReference>
<dbReference type="SMR" id="Q89J97"/>
<dbReference type="FunCoup" id="Q89J97">
    <property type="interactions" value="805"/>
</dbReference>
<dbReference type="STRING" id="224911.AAV28_24345"/>
<dbReference type="EnsemblBacteria" id="BAC50652">
    <property type="protein sequence ID" value="BAC50652"/>
    <property type="gene ID" value="BAC50652"/>
</dbReference>
<dbReference type="GeneID" id="46492385"/>
<dbReference type="KEGG" id="bja:bll5387"/>
<dbReference type="PATRIC" id="fig|224911.44.peg.5286"/>
<dbReference type="eggNOG" id="COG0199">
    <property type="taxonomic scope" value="Bacteria"/>
</dbReference>
<dbReference type="HOGENOM" id="CLU_139869_0_1_5"/>
<dbReference type="InParanoid" id="Q89J97"/>
<dbReference type="OrthoDB" id="9810484at2"/>
<dbReference type="PhylomeDB" id="Q89J97"/>
<dbReference type="Proteomes" id="UP000002526">
    <property type="component" value="Chromosome"/>
</dbReference>
<dbReference type="GO" id="GO:0005737">
    <property type="term" value="C:cytoplasm"/>
    <property type="evidence" value="ECO:0007669"/>
    <property type="project" value="UniProtKB-ARBA"/>
</dbReference>
<dbReference type="GO" id="GO:0015935">
    <property type="term" value="C:small ribosomal subunit"/>
    <property type="evidence" value="ECO:0000318"/>
    <property type="project" value="GO_Central"/>
</dbReference>
<dbReference type="GO" id="GO:0019843">
    <property type="term" value="F:rRNA binding"/>
    <property type="evidence" value="ECO:0007669"/>
    <property type="project" value="UniProtKB-UniRule"/>
</dbReference>
<dbReference type="GO" id="GO:0003735">
    <property type="term" value="F:structural constituent of ribosome"/>
    <property type="evidence" value="ECO:0000318"/>
    <property type="project" value="GO_Central"/>
</dbReference>
<dbReference type="GO" id="GO:0006412">
    <property type="term" value="P:translation"/>
    <property type="evidence" value="ECO:0000318"/>
    <property type="project" value="GO_Central"/>
</dbReference>
<dbReference type="FunFam" id="1.10.287.1480:FF:000001">
    <property type="entry name" value="30S ribosomal protein S14"/>
    <property type="match status" value="1"/>
</dbReference>
<dbReference type="Gene3D" id="1.10.287.1480">
    <property type="match status" value="1"/>
</dbReference>
<dbReference type="HAMAP" id="MF_00537">
    <property type="entry name" value="Ribosomal_uS14_1"/>
    <property type="match status" value="1"/>
</dbReference>
<dbReference type="InterPro" id="IPR001209">
    <property type="entry name" value="Ribosomal_uS14"/>
</dbReference>
<dbReference type="InterPro" id="IPR023036">
    <property type="entry name" value="Ribosomal_uS14_bac/plastid"/>
</dbReference>
<dbReference type="NCBIfam" id="NF006477">
    <property type="entry name" value="PRK08881.1"/>
    <property type="match status" value="1"/>
</dbReference>
<dbReference type="PANTHER" id="PTHR19836">
    <property type="entry name" value="30S RIBOSOMAL PROTEIN S14"/>
    <property type="match status" value="1"/>
</dbReference>
<dbReference type="PANTHER" id="PTHR19836:SF19">
    <property type="entry name" value="SMALL RIBOSOMAL SUBUNIT PROTEIN US14M"/>
    <property type="match status" value="1"/>
</dbReference>
<dbReference type="Pfam" id="PF00253">
    <property type="entry name" value="Ribosomal_S14"/>
    <property type="match status" value="1"/>
</dbReference>
<dbReference type="SUPFAM" id="SSF57716">
    <property type="entry name" value="Glucocorticoid receptor-like (DNA-binding domain)"/>
    <property type="match status" value="1"/>
</dbReference>
<comment type="function">
    <text evidence="1">Binds 16S rRNA, required for the assembly of 30S particles and may also be responsible for determining the conformation of the 16S rRNA at the A site.</text>
</comment>
<comment type="subunit">
    <text evidence="1">Part of the 30S ribosomal subunit. Contacts proteins S3 and S10.</text>
</comment>
<comment type="similarity">
    <text evidence="1">Belongs to the universal ribosomal protein uS14 family.</text>
</comment>
<organism>
    <name type="scientific">Bradyrhizobium diazoefficiens (strain JCM 10833 / BCRC 13528 / IAM 13628 / NBRC 14792 / USDA 110)</name>
    <dbReference type="NCBI Taxonomy" id="224911"/>
    <lineage>
        <taxon>Bacteria</taxon>
        <taxon>Pseudomonadati</taxon>
        <taxon>Pseudomonadota</taxon>
        <taxon>Alphaproteobacteria</taxon>
        <taxon>Hyphomicrobiales</taxon>
        <taxon>Nitrobacteraceae</taxon>
        <taxon>Bradyrhizobium</taxon>
    </lineage>
</organism>
<keyword id="KW-1185">Reference proteome</keyword>
<keyword id="KW-0687">Ribonucleoprotein</keyword>
<keyword id="KW-0689">Ribosomal protein</keyword>
<keyword id="KW-0694">RNA-binding</keyword>
<keyword id="KW-0699">rRNA-binding</keyword>
<feature type="chain" id="PRO_1000128317" description="Small ribosomal subunit protein uS14">
    <location>
        <begin position="1"/>
        <end position="101"/>
    </location>
</feature>
<feature type="region of interest" description="Disordered" evidence="2">
    <location>
        <begin position="1"/>
        <end position="23"/>
    </location>
</feature>
<feature type="compositionally biased region" description="Basic and acidic residues" evidence="2">
    <location>
        <begin position="1"/>
        <end position="10"/>
    </location>
</feature>
<sequence>MAKKSSIEKNNRRKRMVKNAAPKRERLKAIIADKTLPMEERFAATLKLAEMPRNSSATRVRLRCELSGRPRSNYRKNKLSRIALRELGSKGMVPGLVKSSW</sequence>
<reference key="1">
    <citation type="journal article" date="2002" name="DNA Res.">
        <title>Complete genomic sequence of nitrogen-fixing symbiotic bacterium Bradyrhizobium japonicum USDA110.</title>
        <authorList>
            <person name="Kaneko T."/>
            <person name="Nakamura Y."/>
            <person name="Sato S."/>
            <person name="Minamisawa K."/>
            <person name="Uchiumi T."/>
            <person name="Sasamoto S."/>
            <person name="Watanabe A."/>
            <person name="Idesawa K."/>
            <person name="Iriguchi M."/>
            <person name="Kawashima K."/>
            <person name="Kohara M."/>
            <person name="Matsumoto M."/>
            <person name="Shimpo S."/>
            <person name="Tsuruoka H."/>
            <person name="Wada T."/>
            <person name="Yamada M."/>
            <person name="Tabata S."/>
        </authorList>
    </citation>
    <scope>NUCLEOTIDE SEQUENCE [LARGE SCALE GENOMIC DNA]</scope>
    <source>
        <strain>JCM 10833 / BCRC 13528 / IAM 13628 / NBRC 14792 / USDA 110</strain>
    </source>
</reference>
<protein>
    <recommendedName>
        <fullName evidence="1">Small ribosomal subunit protein uS14</fullName>
    </recommendedName>
    <alternativeName>
        <fullName evidence="3">30S ribosomal protein S14</fullName>
    </alternativeName>
</protein>